<comment type="catalytic activity">
    <reaction evidence="1">
        <text>N-(5-phospho-beta-D-ribosyl)anthranilate = 1-(2-carboxyphenylamino)-1-deoxy-D-ribulose 5-phosphate</text>
        <dbReference type="Rhea" id="RHEA:21540"/>
        <dbReference type="ChEBI" id="CHEBI:18277"/>
        <dbReference type="ChEBI" id="CHEBI:58613"/>
        <dbReference type="EC" id="5.3.1.24"/>
    </reaction>
</comment>
<comment type="pathway">
    <text evidence="1">Amino-acid biosynthesis; L-tryptophan biosynthesis; L-tryptophan from chorismate: step 3/5.</text>
</comment>
<comment type="similarity">
    <text evidence="1">Belongs to the TrpF family.</text>
</comment>
<proteinExistence type="inferred from homology"/>
<protein>
    <recommendedName>
        <fullName evidence="1">N-(5'-phosphoribosyl)anthranilate isomerase</fullName>
        <shortName evidence="1">PRAI</shortName>
        <ecNumber evidence="1">5.3.1.24</ecNumber>
    </recommendedName>
</protein>
<sequence length="211" mass="21856">MAKVKICGLKDPDMVAFAAREGADWVGFVFAPSVRQVTLAAAETLLLSVGKATPVALMVDPSDAEAQAVAALGFPILQLHGQETPARAAELKSLTGCAIWKAIGVQTRDNLGQIGTFPDIDGLLLDAKPPEGATIAGGHGAAFDWSILKGWTAPKPWLLAGGLTPENVAEAIAATGAPGVDVSSGVERIRGLKDRELVRAFIRAAKASEQP</sequence>
<evidence type="ECO:0000255" key="1">
    <source>
        <dbReference type="HAMAP-Rule" id="MF_00135"/>
    </source>
</evidence>
<name>TRPF_HYPNA</name>
<dbReference type="EC" id="5.3.1.24" evidence="1"/>
<dbReference type="EMBL" id="CP000158">
    <property type="protein sequence ID" value="ABI75671.1"/>
    <property type="molecule type" value="Genomic_DNA"/>
</dbReference>
<dbReference type="RefSeq" id="WP_011648443.1">
    <property type="nucleotide sequence ID" value="NC_008358.1"/>
</dbReference>
<dbReference type="SMR" id="Q0BWJ4"/>
<dbReference type="STRING" id="228405.HNE_3477"/>
<dbReference type="KEGG" id="hne:HNE_3477"/>
<dbReference type="eggNOG" id="COG0135">
    <property type="taxonomic scope" value="Bacteria"/>
</dbReference>
<dbReference type="HOGENOM" id="CLU_076364_1_1_5"/>
<dbReference type="UniPathway" id="UPA00035">
    <property type="reaction ID" value="UER00042"/>
</dbReference>
<dbReference type="Proteomes" id="UP000001959">
    <property type="component" value="Chromosome"/>
</dbReference>
<dbReference type="GO" id="GO:0004640">
    <property type="term" value="F:phosphoribosylanthranilate isomerase activity"/>
    <property type="evidence" value="ECO:0007669"/>
    <property type="project" value="UniProtKB-UniRule"/>
</dbReference>
<dbReference type="GO" id="GO:0000162">
    <property type="term" value="P:L-tryptophan biosynthetic process"/>
    <property type="evidence" value="ECO:0007669"/>
    <property type="project" value="UniProtKB-UniRule"/>
</dbReference>
<dbReference type="CDD" id="cd00405">
    <property type="entry name" value="PRAI"/>
    <property type="match status" value="1"/>
</dbReference>
<dbReference type="Gene3D" id="3.20.20.70">
    <property type="entry name" value="Aldolase class I"/>
    <property type="match status" value="1"/>
</dbReference>
<dbReference type="HAMAP" id="MF_00135">
    <property type="entry name" value="PRAI"/>
    <property type="match status" value="1"/>
</dbReference>
<dbReference type="InterPro" id="IPR013785">
    <property type="entry name" value="Aldolase_TIM"/>
</dbReference>
<dbReference type="InterPro" id="IPR001240">
    <property type="entry name" value="PRAI_dom"/>
</dbReference>
<dbReference type="InterPro" id="IPR011060">
    <property type="entry name" value="RibuloseP-bd_barrel"/>
</dbReference>
<dbReference type="InterPro" id="IPR044643">
    <property type="entry name" value="TrpF_fam"/>
</dbReference>
<dbReference type="NCBIfam" id="NF002295">
    <property type="entry name" value="PRK01222.1-1"/>
    <property type="match status" value="1"/>
</dbReference>
<dbReference type="PANTHER" id="PTHR42894">
    <property type="entry name" value="N-(5'-PHOSPHORIBOSYL)ANTHRANILATE ISOMERASE"/>
    <property type="match status" value="1"/>
</dbReference>
<dbReference type="PANTHER" id="PTHR42894:SF1">
    <property type="entry name" value="N-(5'-PHOSPHORIBOSYL)ANTHRANILATE ISOMERASE"/>
    <property type="match status" value="1"/>
</dbReference>
<dbReference type="Pfam" id="PF00697">
    <property type="entry name" value="PRAI"/>
    <property type="match status" value="1"/>
</dbReference>
<dbReference type="SUPFAM" id="SSF51366">
    <property type="entry name" value="Ribulose-phoshate binding barrel"/>
    <property type="match status" value="1"/>
</dbReference>
<reference key="1">
    <citation type="journal article" date="2006" name="J. Bacteriol.">
        <title>Comparative genomic evidence for a close relationship between the dimorphic prosthecate bacteria Hyphomonas neptunium and Caulobacter crescentus.</title>
        <authorList>
            <person name="Badger J.H."/>
            <person name="Hoover T.R."/>
            <person name="Brun Y.V."/>
            <person name="Weiner R.M."/>
            <person name="Laub M.T."/>
            <person name="Alexandre G."/>
            <person name="Mrazek J."/>
            <person name="Ren Q."/>
            <person name="Paulsen I.T."/>
            <person name="Nelson K.E."/>
            <person name="Khouri H.M."/>
            <person name="Radune D."/>
            <person name="Sosa J."/>
            <person name="Dodson R.J."/>
            <person name="Sullivan S.A."/>
            <person name="Rosovitz M.J."/>
            <person name="Madupu R."/>
            <person name="Brinkac L.M."/>
            <person name="Durkin A.S."/>
            <person name="Daugherty S.C."/>
            <person name="Kothari S.P."/>
            <person name="Giglio M.G."/>
            <person name="Zhou L."/>
            <person name="Haft D.H."/>
            <person name="Selengut J.D."/>
            <person name="Davidsen T.M."/>
            <person name="Yang Q."/>
            <person name="Zafar N."/>
            <person name="Ward N.L."/>
        </authorList>
    </citation>
    <scope>NUCLEOTIDE SEQUENCE [LARGE SCALE GENOMIC DNA]</scope>
    <source>
        <strain>ATCC 15444</strain>
    </source>
</reference>
<keyword id="KW-0028">Amino-acid biosynthesis</keyword>
<keyword id="KW-0057">Aromatic amino acid biosynthesis</keyword>
<keyword id="KW-0413">Isomerase</keyword>
<keyword id="KW-1185">Reference proteome</keyword>
<keyword id="KW-0822">Tryptophan biosynthesis</keyword>
<feature type="chain" id="PRO_1000018598" description="N-(5'-phosphoribosyl)anthranilate isomerase">
    <location>
        <begin position="1"/>
        <end position="211"/>
    </location>
</feature>
<organism>
    <name type="scientific">Hyphomonas neptunium (strain ATCC 15444)</name>
    <dbReference type="NCBI Taxonomy" id="228405"/>
    <lineage>
        <taxon>Bacteria</taxon>
        <taxon>Pseudomonadati</taxon>
        <taxon>Pseudomonadota</taxon>
        <taxon>Alphaproteobacteria</taxon>
        <taxon>Hyphomonadales</taxon>
        <taxon>Hyphomonadaceae</taxon>
        <taxon>Hyphomonas</taxon>
    </lineage>
</organism>
<gene>
    <name evidence="1" type="primary">trpF</name>
    <name type="ordered locus">HNE_3477</name>
</gene>
<accession>Q0BWJ4</accession>